<feature type="chain" id="PRO_0000447139" description="Protein MgtT">
    <location>
        <begin position="1"/>
        <end position="34"/>
    </location>
</feature>
<feature type="region of interest" description="Disordered" evidence="1">
    <location>
        <begin position="1"/>
        <end position="34"/>
    </location>
</feature>
<feature type="compositionally biased region" description="Basic and acidic residues" evidence="1">
    <location>
        <begin position="24"/>
        <end position="34"/>
    </location>
</feature>
<reference key="1">
    <citation type="journal article" date="1997" name="Science">
        <title>The complete genome sequence of Escherichia coli K-12.</title>
        <authorList>
            <person name="Blattner F.R."/>
            <person name="Plunkett G. III"/>
            <person name="Bloch C.A."/>
            <person name="Perna N.T."/>
            <person name="Burland V."/>
            <person name="Riley M."/>
            <person name="Collado-Vides J."/>
            <person name="Glasner J.D."/>
            <person name="Rode C.K."/>
            <person name="Mayhew G.F."/>
            <person name="Gregor J."/>
            <person name="Davis N.W."/>
            <person name="Kirkpatrick H.A."/>
            <person name="Goeden M.A."/>
            <person name="Rose D.J."/>
            <person name="Mau B."/>
            <person name="Shao Y."/>
        </authorList>
    </citation>
    <scope>NUCLEOTIDE SEQUENCE [LARGE SCALE GENOMIC DNA]</scope>
    <source>
        <strain>K12 / MG1655 / ATCC 47076</strain>
    </source>
</reference>
<reference key="2">
    <citation type="journal article" date="2019" name="MBio">
        <title>Identifying small proteins by ribosome profiling with stalled initiation complexes.</title>
        <authorList>
            <person name="Weaver J."/>
            <person name="Mohammad F."/>
            <person name="Buskirk A.R."/>
            <person name="Storz G."/>
        </authorList>
    </citation>
    <scope>IDENTIFICATION</scope>
    <scope>INDUCTION</scope>
    <source>
        <strain>K12 / MG1655 / ATCC 47076</strain>
    </source>
</reference>
<gene>
    <name evidence="3" type="primary">mgtT</name>
    <name evidence="4" type="ordered locus">b4775</name>
</gene>
<dbReference type="EMBL" id="U00096">
    <property type="protein sequence ID" value="QNV50528.1"/>
    <property type="molecule type" value="Genomic_DNA"/>
</dbReference>
<dbReference type="InParanoid" id="P0DSF3"/>
<dbReference type="BioCyc" id="EcoCyc:MONOMER0-4487"/>
<dbReference type="Proteomes" id="UP000000625">
    <property type="component" value="Chromosome"/>
</dbReference>
<dbReference type="InterPro" id="IPR057128">
    <property type="entry name" value="MgtT"/>
</dbReference>
<dbReference type="Pfam" id="PF23498">
    <property type="entry name" value="MgtT"/>
    <property type="match status" value="1"/>
</dbReference>
<protein>
    <recommendedName>
        <fullName evidence="3">Protein MgtT</fullName>
    </recommendedName>
</protein>
<keyword id="KW-1185">Reference proteome</keyword>
<comment type="induction">
    <text evidence="2">Expressed in both exponential and stationary phase in rich medium; expression is higher in exponential phase (at protein level).</text>
</comment>
<comment type="miscellaneous">
    <text evidence="2">This gene lies just downstream of mgtS on the same strand in another reading frame and is encoded antisense of the mgrR small regulatory RNA gene.</text>
</comment>
<organism>
    <name type="scientific">Escherichia coli (strain K12)</name>
    <dbReference type="NCBI Taxonomy" id="83333"/>
    <lineage>
        <taxon>Bacteria</taxon>
        <taxon>Pseudomonadati</taxon>
        <taxon>Pseudomonadota</taxon>
        <taxon>Gammaproteobacteria</taxon>
        <taxon>Enterobacterales</taxon>
        <taxon>Enterobacteriaceae</taxon>
        <taxon>Escherichia</taxon>
    </lineage>
</organism>
<name>MGTT_ECOLI</name>
<accession>P0DSF3</accession>
<accession>A0A7H2C781</accession>
<proteinExistence type="evidence at protein level"/>
<sequence>MNGDNPSPNRPLVTVVYKGPDFYDGEKKPPVNRR</sequence>
<evidence type="ECO:0000256" key="1">
    <source>
        <dbReference type="SAM" id="MobiDB-lite"/>
    </source>
</evidence>
<evidence type="ECO:0000269" key="2">
    <source>
    </source>
</evidence>
<evidence type="ECO:0000303" key="3">
    <source>
    </source>
</evidence>
<evidence type="ECO:0000312" key="4">
    <source>
        <dbReference type="EMBL" id="QNV50528.1"/>
    </source>
</evidence>